<protein>
    <recommendedName>
        <fullName>Glycoprotein 3-alpha-L-fucosyltransferase A</fullName>
        <ecNumber evidence="4">2.4.1.214</ecNumber>
    </recommendedName>
    <alternativeName>
        <fullName>Core alpha-(1,3)-fucosyltransferase</fullName>
    </alternativeName>
</protein>
<proteinExistence type="evidence at protein level"/>
<accession>Q9VUL9</accession>
<accession>Q8SYT5</accession>
<gene>
    <name type="primary">FucTA</name>
    <name type="ORF">CG6869</name>
</gene>
<organism>
    <name type="scientific">Drosophila melanogaster</name>
    <name type="common">Fruit fly</name>
    <dbReference type="NCBI Taxonomy" id="7227"/>
    <lineage>
        <taxon>Eukaryota</taxon>
        <taxon>Metazoa</taxon>
        <taxon>Ecdysozoa</taxon>
        <taxon>Arthropoda</taxon>
        <taxon>Hexapoda</taxon>
        <taxon>Insecta</taxon>
        <taxon>Pterygota</taxon>
        <taxon>Neoptera</taxon>
        <taxon>Endopterygota</taxon>
        <taxon>Diptera</taxon>
        <taxon>Brachycera</taxon>
        <taxon>Muscomorpha</taxon>
        <taxon>Ephydroidea</taxon>
        <taxon>Drosophilidae</taxon>
        <taxon>Drosophila</taxon>
        <taxon>Sophophora</taxon>
    </lineage>
</organism>
<keyword id="KW-0325">Glycoprotein</keyword>
<keyword id="KW-0328">Glycosyltransferase</keyword>
<keyword id="KW-0333">Golgi apparatus</keyword>
<keyword id="KW-0472">Membrane</keyword>
<keyword id="KW-1185">Reference proteome</keyword>
<keyword id="KW-0735">Signal-anchor</keyword>
<keyword id="KW-0808">Transferase</keyword>
<keyword id="KW-0812">Transmembrane</keyword>
<keyword id="KW-1133">Transmembrane helix</keyword>
<feature type="chain" id="PRO_0000221122" description="Glycoprotein 3-alpha-L-fucosyltransferase A">
    <location>
        <begin position="1"/>
        <end position="503"/>
    </location>
</feature>
<feature type="topological domain" description="Cytoplasmic" evidence="2">
    <location>
        <begin position="1"/>
        <end position="10"/>
    </location>
</feature>
<feature type="transmembrane region" description="Helical; Signal-anchor for type II membrane protein" evidence="2">
    <location>
        <begin position="11"/>
        <end position="28"/>
    </location>
</feature>
<feature type="topological domain" description="Lumenal" evidence="2">
    <location>
        <begin position="29"/>
        <end position="503"/>
    </location>
</feature>
<feature type="region of interest" description="Disordered" evidence="3">
    <location>
        <begin position="44"/>
        <end position="71"/>
    </location>
</feature>
<feature type="compositionally biased region" description="Low complexity" evidence="3">
    <location>
        <begin position="47"/>
        <end position="58"/>
    </location>
</feature>
<feature type="glycosylation site" description="N-linked (GlcNAc...) asparagine" evidence="2">
    <location>
        <position position="262"/>
    </location>
</feature>
<feature type="glycosylation site" description="N-linked (GlcNAc...) asparagine" evidence="2">
    <location>
        <position position="295"/>
    </location>
</feature>
<feature type="glycosylation site" description="N-linked (GlcNAc...) asparagine" evidence="2">
    <location>
        <position position="299"/>
    </location>
</feature>
<feature type="sequence conflict" description="In Ref. 1; CAC41641." evidence="6" ref="1">
    <original>H</original>
    <variation>Y</variation>
    <location>
        <position position="53"/>
    </location>
</feature>
<reference key="1">
    <citation type="journal article" date="2001" name="J. Biol. Chem.">
        <title>Identification of core alpha1,3-fucosylated glycans and cloning of the requisite fucosyltransferase cDNA from Drosophila melanogaster: Potential basis of the neural anti-horseradish peroxidase epitope.</title>
        <authorList>
            <person name="Fabini G."/>
            <person name="Freilinger A."/>
            <person name="Altmann F."/>
            <person name="Wilson I.B.H."/>
        </authorList>
    </citation>
    <scope>NUCLEOTIDE SEQUENCE [MRNA]</scope>
    <scope>FUNCTION</scope>
    <scope>CATALYTIC ACTIVITY</scope>
    <source>
        <strain>Canton-S</strain>
    </source>
</reference>
<reference key="2">
    <citation type="journal article" date="2000" name="Science">
        <title>The genome sequence of Drosophila melanogaster.</title>
        <authorList>
            <person name="Adams M.D."/>
            <person name="Celniker S.E."/>
            <person name="Holt R.A."/>
            <person name="Evans C.A."/>
            <person name="Gocayne J.D."/>
            <person name="Amanatides P.G."/>
            <person name="Scherer S.E."/>
            <person name="Li P.W."/>
            <person name="Hoskins R.A."/>
            <person name="Galle R.F."/>
            <person name="George R.A."/>
            <person name="Lewis S.E."/>
            <person name="Richards S."/>
            <person name="Ashburner M."/>
            <person name="Henderson S.N."/>
            <person name="Sutton G.G."/>
            <person name="Wortman J.R."/>
            <person name="Yandell M.D."/>
            <person name="Zhang Q."/>
            <person name="Chen L.X."/>
            <person name="Brandon R.C."/>
            <person name="Rogers Y.-H.C."/>
            <person name="Blazej R.G."/>
            <person name="Champe M."/>
            <person name="Pfeiffer B.D."/>
            <person name="Wan K.H."/>
            <person name="Doyle C."/>
            <person name="Baxter E.G."/>
            <person name="Helt G."/>
            <person name="Nelson C.R."/>
            <person name="Miklos G.L.G."/>
            <person name="Abril J.F."/>
            <person name="Agbayani A."/>
            <person name="An H.-J."/>
            <person name="Andrews-Pfannkoch C."/>
            <person name="Baldwin D."/>
            <person name="Ballew R.M."/>
            <person name="Basu A."/>
            <person name="Baxendale J."/>
            <person name="Bayraktaroglu L."/>
            <person name="Beasley E.M."/>
            <person name="Beeson K.Y."/>
            <person name="Benos P.V."/>
            <person name="Berman B.P."/>
            <person name="Bhandari D."/>
            <person name="Bolshakov S."/>
            <person name="Borkova D."/>
            <person name="Botchan M.R."/>
            <person name="Bouck J."/>
            <person name="Brokstein P."/>
            <person name="Brottier P."/>
            <person name="Burtis K.C."/>
            <person name="Busam D.A."/>
            <person name="Butler H."/>
            <person name="Cadieu E."/>
            <person name="Center A."/>
            <person name="Chandra I."/>
            <person name="Cherry J.M."/>
            <person name="Cawley S."/>
            <person name="Dahlke C."/>
            <person name="Davenport L.B."/>
            <person name="Davies P."/>
            <person name="de Pablos B."/>
            <person name="Delcher A."/>
            <person name="Deng Z."/>
            <person name="Mays A.D."/>
            <person name="Dew I."/>
            <person name="Dietz S.M."/>
            <person name="Dodson K."/>
            <person name="Doup L.E."/>
            <person name="Downes M."/>
            <person name="Dugan-Rocha S."/>
            <person name="Dunkov B.C."/>
            <person name="Dunn P."/>
            <person name="Durbin K.J."/>
            <person name="Evangelista C.C."/>
            <person name="Ferraz C."/>
            <person name="Ferriera S."/>
            <person name="Fleischmann W."/>
            <person name="Fosler C."/>
            <person name="Gabrielian A.E."/>
            <person name="Garg N.S."/>
            <person name="Gelbart W.M."/>
            <person name="Glasser K."/>
            <person name="Glodek A."/>
            <person name="Gong F."/>
            <person name="Gorrell J.H."/>
            <person name="Gu Z."/>
            <person name="Guan P."/>
            <person name="Harris M."/>
            <person name="Harris N.L."/>
            <person name="Harvey D.A."/>
            <person name="Heiman T.J."/>
            <person name="Hernandez J.R."/>
            <person name="Houck J."/>
            <person name="Hostin D."/>
            <person name="Houston K.A."/>
            <person name="Howland T.J."/>
            <person name="Wei M.-H."/>
            <person name="Ibegwam C."/>
            <person name="Jalali M."/>
            <person name="Kalush F."/>
            <person name="Karpen G.H."/>
            <person name="Ke Z."/>
            <person name="Kennison J.A."/>
            <person name="Ketchum K.A."/>
            <person name="Kimmel B.E."/>
            <person name="Kodira C.D."/>
            <person name="Kraft C.L."/>
            <person name="Kravitz S."/>
            <person name="Kulp D."/>
            <person name="Lai Z."/>
            <person name="Lasko P."/>
            <person name="Lei Y."/>
            <person name="Levitsky A.A."/>
            <person name="Li J.H."/>
            <person name="Li Z."/>
            <person name="Liang Y."/>
            <person name="Lin X."/>
            <person name="Liu X."/>
            <person name="Mattei B."/>
            <person name="McIntosh T.C."/>
            <person name="McLeod M.P."/>
            <person name="McPherson D."/>
            <person name="Merkulov G."/>
            <person name="Milshina N.V."/>
            <person name="Mobarry C."/>
            <person name="Morris J."/>
            <person name="Moshrefi A."/>
            <person name="Mount S.M."/>
            <person name="Moy M."/>
            <person name="Murphy B."/>
            <person name="Murphy L."/>
            <person name="Muzny D.M."/>
            <person name="Nelson D.L."/>
            <person name="Nelson D.R."/>
            <person name="Nelson K.A."/>
            <person name="Nixon K."/>
            <person name="Nusskern D.R."/>
            <person name="Pacleb J.M."/>
            <person name="Palazzolo M."/>
            <person name="Pittman G.S."/>
            <person name="Pan S."/>
            <person name="Pollard J."/>
            <person name="Puri V."/>
            <person name="Reese M.G."/>
            <person name="Reinert K."/>
            <person name="Remington K."/>
            <person name="Saunders R.D.C."/>
            <person name="Scheeler F."/>
            <person name="Shen H."/>
            <person name="Shue B.C."/>
            <person name="Siden-Kiamos I."/>
            <person name="Simpson M."/>
            <person name="Skupski M.P."/>
            <person name="Smith T.J."/>
            <person name="Spier E."/>
            <person name="Spradling A.C."/>
            <person name="Stapleton M."/>
            <person name="Strong R."/>
            <person name="Sun E."/>
            <person name="Svirskas R."/>
            <person name="Tector C."/>
            <person name="Turner R."/>
            <person name="Venter E."/>
            <person name="Wang A.H."/>
            <person name="Wang X."/>
            <person name="Wang Z.-Y."/>
            <person name="Wassarman D.A."/>
            <person name="Weinstock G.M."/>
            <person name="Weissenbach J."/>
            <person name="Williams S.M."/>
            <person name="Woodage T."/>
            <person name="Worley K.C."/>
            <person name="Wu D."/>
            <person name="Yang S."/>
            <person name="Yao Q.A."/>
            <person name="Ye J."/>
            <person name="Yeh R.-F."/>
            <person name="Zaveri J.S."/>
            <person name="Zhan M."/>
            <person name="Zhang G."/>
            <person name="Zhao Q."/>
            <person name="Zheng L."/>
            <person name="Zheng X.H."/>
            <person name="Zhong F.N."/>
            <person name="Zhong W."/>
            <person name="Zhou X."/>
            <person name="Zhu S.C."/>
            <person name="Zhu X."/>
            <person name="Smith H.O."/>
            <person name="Gibbs R.A."/>
            <person name="Myers E.W."/>
            <person name="Rubin G.M."/>
            <person name="Venter J.C."/>
        </authorList>
    </citation>
    <scope>NUCLEOTIDE SEQUENCE [LARGE SCALE GENOMIC DNA]</scope>
    <source>
        <strain>Berkeley</strain>
    </source>
</reference>
<reference key="3">
    <citation type="journal article" date="2002" name="Genome Biol.">
        <title>Annotation of the Drosophila melanogaster euchromatic genome: a systematic review.</title>
        <authorList>
            <person name="Misra S."/>
            <person name="Crosby M.A."/>
            <person name="Mungall C.J."/>
            <person name="Matthews B.B."/>
            <person name="Campbell K.S."/>
            <person name="Hradecky P."/>
            <person name="Huang Y."/>
            <person name="Kaminker J.S."/>
            <person name="Millburn G.H."/>
            <person name="Prochnik S.E."/>
            <person name="Smith C.D."/>
            <person name="Tupy J.L."/>
            <person name="Whitfield E.J."/>
            <person name="Bayraktaroglu L."/>
            <person name="Berman B.P."/>
            <person name="Bettencourt B.R."/>
            <person name="Celniker S.E."/>
            <person name="de Grey A.D.N.J."/>
            <person name="Drysdale R.A."/>
            <person name="Harris N.L."/>
            <person name="Richter J."/>
            <person name="Russo S."/>
            <person name="Schroeder A.J."/>
            <person name="Shu S.Q."/>
            <person name="Stapleton M."/>
            <person name="Yamada C."/>
            <person name="Ashburner M."/>
            <person name="Gelbart W.M."/>
            <person name="Rubin G.M."/>
            <person name="Lewis S.E."/>
        </authorList>
    </citation>
    <scope>GENOME REANNOTATION</scope>
    <source>
        <strain>Berkeley</strain>
    </source>
</reference>
<reference key="4">
    <citation type="journal article" date="2002" name="Genome Biol.">
        <title>A Drosophila full-length cDNA resource.</title>
        <authorList>
            <person name="Stapleton M."/>
            <person name="Carlson J.W."/>
            <person name="Brokstein P."/>
            <person name="Yu C."/>
            <person name="Champe M."/>
            <person name="George R.A."/>
            <person name="Guarin H."/>
            <person name="Kronmiller B."/>
            <person name="Pacleb J.M."/>
            <person name="Park S."/>
            <person name="Wan K.H."/>
            <person name="Rubin G.M."/>
            <person name="Celniker S.E."/>
        </authorList>
    </citation>
    <scope>NUCLEOTIDE SEQUENCE [LARGE SCALE MRNA]</scope>
    <source>
        <strain>Berkeley</strain>
        <tissue>Embryo</tissue>
    </source>
</reference>
<reference key="5">
    <citation type="journal article" date="2010" name="PLoS Genet.">
        <title>Identification of genes required for neural-specific glycosylation using functional genomics.</title>
        <authorList>
            <person name="Yamamoto-Hino M."/>
            <person name="Kanie Y."/>
            <person name="Awano W."/>
            <person name="Aoki-Kinoshita K.F."/>
            <person name="Yano H."/>
            <person name="Nishihara S."/>
            <person name="Okano H."/>
            <person name="Ueda R."/>
            <person name="Kanie O."/>
            <person name="Goto S."/>
        </authorList>
    </citation>
    <scope>FUNCTION</scope>
    <scope>DISRUPTION PHENOTYPE</scope>
</reference>
<name>FUCTA_DROME</name>
<evidence type="ECO:0000250" key="1"/>
<evidence type="ECO:0000255" key="2"/>
<evidence type="ECO:0000256" key="3">
    <source>
        <dbReference type="SAM" id="MobiDB-lite"/>
    </source>
</evidence>
<evidence type="ECO:0000269" key="4">
    <source>
    </source>
</evidence>
<evidence type="ECO:0000269" key="5">
    <source>
    </source>
</evidence>
<evidence type="ECO:0000305" key="6"/>
<evidence type="ECO:0000305" key="7">
    <source>
    </source>
</evidence>
<sequence length="503" mass="59160">MRRPKISLKKYFYLTLICALLLIFGFSLKEREIWKTLSPRSSQITTQQQQHQHLHQLQSMDEEHPMATSSTPPPIAATLLPEVADNLVEEPEQTVLEEEESEADRLQEPPAEKAWFFKNGEYYPKPAKTYSNRKARKRHAPRLLPHQDPYSDRIINQLMYVPHNYEEIKSSGKLKTILLYNGLGPWNVKKGRDVFLKAKCPVDTCELTANRDLASTADMILYKDHYIPTGIRRPSNSKQVSMLYYLECPYHTQNVKVPDAINWTATYRRDSTIVAPYEKWQYYDTKVQQQEQDINYSVNKTKKVAWFVSNCGARNGRLQYAHELQKYIEVDIYGACGNFKCSRSTADKCFEILDNDYKFYLAFENSNCKDYITEKFFVNALNRRVLPIVMGARPEDYEVSAPRRSYIHVDEFSSPKELAEYLRILDHDDELYNSYFKWKGTGEFINTYYWCRVCATLHNEEQLRKPRWYTDLNDWWRGPGVCTTRSWRNFKARKDVISDSSDD</sequence>
<dbReference type="EC" id="2.4.1.214" evidence="4"/>
<dbReference type="EMBL" id="AJ302045">
    <property type="protein sequence ID" value="CAC41641.1"/>
    <property type="molecule type" value="mRNA"/>
</dbReference>
<dbReference type="EMBL" id="AE014296">
    <property type="protein sequence ID" value="AAF49657.2"/>
    <property type="molecule type" value="Genomic_DNA"/>
</dbReference>
<dbReference type="EMBL" id="AY071324">
    <property type="protein sequence ID" value="AAL48946.1"/>
    <property type="status" value="ALT_FRAME"/>
    <property type="molecule type" value="mRNA"/>
</dbReference>
<dbReference type="RefSeq" id="NP_001261872.1">
    <property type="nucleotide sequence ID" value="NM_001274943.1"/>
</dbReference>
<dbReference type="RefSeq" id="NP_648754.2">
    <property type="nucleotide sequence ID" value="NM_140497.3"/>
</dbReference>
<dbReference type="SMR" id="Q9VUL9"/>
<dbReference type="BioGRID" id="64975">
    <property type="interactions" value="2"/>
</dbReference>
<dbReference type="DIP" id="DIP-23865N"/>
<dbReference type="FunCoup" id="Q9VUL9">
    <property type="interactions" value="58"/>
</dbReference>
<dbReference type="IntAct" id="Q9VUL9">
    <property type="interactions" value="1"/>
</dbReference>
<dbReference type="STRING" id="7227.FBpp0075394"/>
<dbReference type="CAZy" id="GT10">
    <property type="family name" value="Glycosyltransferase Family 10"/>
</dbReference>
<dbReference type="GlyCosmos" id="Q9VUL9">
    <property type="glycosylation" value="3 sites, No reported glycans"/>
</dbReference>
<dbReference type="GlyGen" id="Q9VUL9">
    <property type="glycosylation" value="3 sites"/>
</dbReference>
<dbReference type="PaxDb" id="7227-FBpp0075394"/>
<dbReference type="EnsemblMetazoa" id="FBtr0075641">
    <property type="protein sequence ID" value="FBpp0075394"/>
    <property type="gene ID" value="FBgn0036485"/>
</dbReference>
<dbReference type="EnsemblMetazoa" id="FBtr0331831">
    <property type="protein sequence ID" value="FBpp0304215"/>
    <property type="gene ID" value="FBgn0036485"/>
</dbReference>
<dbReference type="GeneID" id="39653"/>
<dbReference type="KEGG" id="dme:Dmel_CG6869"/>
<dbReference type="AGR" id="FB:FBgn0036485"/>
<dbReference type="CTD" id="39653"/>
<dbReference type="FlyBase" id="FBgn0036485">
    <property type="gene designation" value="FucTA"/>
</dbReference>
<dbReference type="VEuPathDB" id="VectorBase:FBgn0036485"/>
<dbReference type="eggNOG" id="KOG2619">
    <property type="taxonomic scope" value="Eukaryota"/>
</dbReference>
<dbReference type="HOGENOM" id="CLU_032075_6_0_1"/>
<dbReference type="InParanoid" id="Q9VUL9"/>
<dbReference type="OMA" id="PHNYEQI"/>
<dbReference type="OrthoDB" id="427096at2759"/>
<dbReference type="PhylomeDB" id="Q9VUL9"/>
<dbReference type="Reactome" id="R-DME-9037629">
    <property type="pathway name" value="Lewis blood group biosynthesis"/>
</dbReference>
<dbReference type="Reactome" id="R-DME-975578">
    <property type="pathway name" value="Reactions specific to the complex N-glycan synthesis pathway"/>
</dbReference>
<dbReference type="UniPathway" id="UPA00378"/>
<dbReference type="BioGRID-ORCS" id="39653">
    <property type="hits" value="0 hits in 3 CRISPR screens"/>
</dbReference>
<dbReference type="GenomeRNAi" id="39653"/>
<dbReference type="PRO" id="PR:Q9VUL9"/>
<dbReference type="Proteomes" id="UP000000803">
    <property type="component" value="Chromosome 3L"/>
</dbReference>
<dbReference type="Bgee" id="FBgn0036485">
    <property type="expression patterns" value="Expressed in male accessory gland main cell (Drosophila) in male reproductive gland and 93 other cell types or tissues"/>
</dbReference>
<dbReference type="ExpressionAtlas" id="Q9VUL9">
    <property type="expression patterns" value="baseline and differential"/>
</dbReference>
<dbReference type="GO" id="GO:0032580">
    <property type="term" value="C:Golgi cisterna membrane"/>
    <property type="evidence" value="ECO:0007669"/>
    <property type="project" value="UniProtKB-SubCell"/>
</dbReference>
<dbReference type="GO" id="GO:0005797">
    <property type="term" value="C:Golgi medial cisterna"/>
    <property type="evidence" value="ECO:0000314"/>
    <property type="project" value="FlyBase"/>
</dbReference>
<dbReference type="GO" id="GO:0046920">
    <property type="term" value="F:alpha-(1-&gt;3)-fucosyltransferase activity"/>
    <property type="evidence" value="ECO:0000314"/>
    <property type="project" value="FlyBase"/>
</dbReference>
<dbReference type="GO" id="GO:0018392">
    <property type="term" value="F:glycoprotein 3-alpha-L-fucosyltransferase activity"/>
    <property type="evidence" value="ECO:0000314"/>
    <property type="project" value="UniProtKB"/>
</dbReference>
<dbReference type="GO" id="GO:0036065">
    <property type="term" value="P:fucosylation"/>
    <property type="evidence" value="ECO:0000318"/>
    <property type="project" value="GO_Central"/>
</dbReference>
<dbReference type="GO" id="GO:0036071">
    <property type="term" value="P:N-glycan fucosylation"/>
    <property type="evidence" value="ECO:0000315"/>
    <property type="project" value="FlyBase"/>
</dbReference>
<dbReference type="GO" id="GO:0007399">
    <property type="term" value="P:nervous system development"/>
    <property type="evidence" value="ECO:0000315"/>
    <property type="project" value="FlyBase"/>
</dbReference>
<dbReference type="GO" id="GO:0006486">
    <property type="term" value="P:protein glycosylation"/>
    <property type="evidence" value="ECO:0000315"/>
    <property type="project" value="FlyBase"/>
</dbReference>
<dbReference type="GO" id="GO:0018279">
    <property type="term" value="P:protein N-linked glycosylation via asparagine"/>
    <property type="evidence" value="ECO:0000314"/>
    <property type="project" value="UniProtKB"/>
</dbReference>
<dbReference type="FunFam" id="3.40.50.11660:FF:000004">
    <property type="entry name" value="Glycoprotein 3-alpha-L-fucosyltransferase A"/>
    <property type="match status" value="1"/>
</dbReference>
<dbReference type="Gene3D" id="3.40.50.11660">
    <property type="entry name" value="Glycosyl transferase family 10, C-terminal domain"/>
    <property type="match status" value="1"/>
</dbReference>
<dbReference type="InterPro" id="IPR055270">
    <property type="entry name" value="Glyco_tran_10_C"/>
</dbReference>
<dbReference type="InterPro" id="IPR031481">
    <property type="entry name" value="Glyco_tran_10_N"/>
</dbReference>
<dbReference type="InterPro" id="IPR001503">
    <property type="entry name" value="Glyco_trans_10"/>
</dbReference>
<dbReference type="InterPro" id="IPR038577">
    <property type="entry name" value="GT10-like_C_sf"/>
</dbReference>
<dbReference type="PANTHER" id="PTHR48438">
    <property type="entry name" value="ALPHA-(1,3)-FUCOSYLTRANSFERASE C-RELATED"/>
    <property type="match status" value="1"/>
</dbReference>
<dbReference type="PANTHER" id="PTHR48438:SF1">
    <property type="entry name" value="ALPHA-(1,3)-FUCOSYLTRANSFERASE C-RELATED"/>
    <property type="match status" value="1"/>
</dbReference>
<dbReference type="Pfam" id="PF17039">
    <property type="entry name" value="Glyco_tran_10_N"/>
    <property type="match status" value="1"/>
</dbReference>
<dbReference type="Pfam" id="PF00852">
    <property type="entry name" value="Glyco_transf_10"/>
    <property type="match status" value="1"/>
</dbReference>
<dbReference type="SUPFAM" id="SSF53756">
    <property type="entry name" value="UDP-Glycosyltransferase/glycogen phosphorylase"/>
    <property type="match status" value="1"/>
</dbReference>
<comment type="function">
    <text evidence="4 5">Catalyzes alpha-1,3 glycosidic linkages of N-glycans (PubMed:11382750). Plays a role in neuronal development by promoting ventral nerve cord formation, possibly by promoting interactions between migrating cells and the extracellular matrix or by promoting neural activity (PubMed:21203496).</text>
</comment>
<comment type="catalytic activity">
    <reaction evidence="4">
        <text>N(4)-{beta-D-GlcNAc-(1-&gt;2)-alpha-D-Man-(1-&gt;3)-[beta-D-GlcNAc-(1-&gt;2)-alpha-D-Man-(1-&gt;6)]-beta-D-Man-(1-&gt;4)-beta-D-GlcNAc-(1-&gt;4)-beta-D-GlcNAc}-L-asparaginyl-[protein] + GDP-beta-L-fucose = N(4)-{beta-D-GlcNAc-(1-&gt;2)-alpha-D-Man-(1-&gt;3)-[beta-D-GlcNAc-(1-&gt;2)-alpha-D-Man-(1-&gt;6)]-beta-D-Man-(1-&gt;4)-beta-D-GlcNAc-(1-&gt;4)-[alpha-L-Fuc(1-&gt;3)]-beta-D-GlcNAc}-L-asparaginyl-[protein] + GDP + H(+)</text>
        <dbReference type="Rhea" id="RHEA:24444"/>
        <dbReference type="Rhea" id="RHEA-COMP:13526"/>
        <dbReference type="Rhea" id="RHEA-COMP:13529"/>
        <dbReference type="ChEBI" id="CHEBI:15378"/>
        <dbReference type="ChEBI" id="CHEBI:57273"/>
        <dbReference type="ChEBI" id="CHEBI:58189"/>
        <dbReference type="ChEBI" id="CHEBI:60651"/>
        <dbReference type="ChEBI" id="CHEBI:137182"/>
        <dbReference type="EC" id="2.4.1.214"/>
    </reaction>
    <physiologicalReaction direction="left-to-right" evidence="7">
        <dbReference type="Rhea" id="RHEA:24445"/>
    </physiologicalReaction>
</comment>
<comment type="cofactor">
    <cofactor>
        <name>Mn(2+)</name>
        <dbReference type="ChEBI" id="CHEBI:29035"/>
    </cofactor>
</comment>
<comment type="pathway">
    <text>Protein modification; protein glycosylation.</text>
</comment>
<comment type="subcellular location">
    <subcellularLocation>
        <location evidence="1">Golgi apparatus</location>
        <location evidence="1">Golgi stack membrane</location>
        <topology evidence="1">Single-pass type II membrane protein</topology>
    </subcellularLocation>
    <text evidence="1">Membrane-bound form in trans cisternae of Golgi.</text>
</comment>
<comment type="disruption phenotype">
    <text evidence="5">Defective alpha-1,3-fucosylation activity and a significantly lower longitudinal length-to-width ratio of the ventral nerve cord (VNC).</text>
</comment>
<comment type="similarity">
    <text evidence="6">Belongs to the glycosyltransferase 10 family.</text>
</comment>
<comment type="sequence caution" evidence="6">
    <conflict type="frameshift">
        <sequence resource="EMBL-CDS" id="AAL48946"/>
    </conflict>
</comment>